<dbReference type="EMBL" id="CP001127">
    <property type="protein sequence ID" value="ACF90465.1"/>
    <property type="molecule type" value="Genomic_DNA"/>
</dbReference>
<dbReference type="RefSeq" id="WP_000208749.1">
    <property type="nucleotide sequence ID" value="NC_011094.1"/>
</dbReference>
<dbReference type="SMR" id="B4TSD6"/>
<dbReference type="KEGG" id="sew:SeSA_A4611"/>
<dbReference type="HOGENOM" id="CLU_156492_0_0_6"/>
<dbReference type="Proteomes" id="UP000001865">
    <property type="component" value="Chromosome"/>
</dbReference>
<dbReference type="GO" id="GO:0045283">
    <property type="term" value="C:fumarate reductase complex"/>
    <property type="evidence" value="ECO:0007669"/>
    <property type="project" value="UniProtKB-UniRule"/>
</dbReference>
<dbReference type="GO" id="GO:0005886">
    <property type="term" value="C:plasma membrane"/>
    <property type="evidence" value="ECO:0007669"/>
    <property type="project" value="UniProtKB-SubCell"/>
</dbReference>
<dbReference type="GO" id="GO:0000104">
    <property type="term" value="F:succinate dehydrogenase activity"/>
    <property type="evidence" value="ECO:0007669"/>
    <property type="project" value="UniProtKB-UniRule"/>
</dbReference>
<dbReference type="CDD" id="cd00546">
    <property type="entry name" value="QFR_TypeD_subunitC"/>
    <property type="match status" value="1"/>
</dbReference>
<dbReference type="Gene3D" id="1.20.1300.10">
    <property type="entry name" value="Fumarate reductase/succinate dehydrogenase, transmembrane subunit"/>
    <property type="match status" value="1"/>
</dbReference>
<dbReference type="HAMAP" id="MF_00708">
    <property type="entry name" value="Fumarate_red_C"/>
    <property type="match status" value="1"/>
</dbReference>
<dbReference type="InterPro" id="IPR003510">
    <property type="entry name" value="Fumarate_red_C"/>
</dbReference>
<dbReference type="InterPro" id="IPR034804">
    <property type="entry name" value="SQR/QFR_C/D"/>
</dbReference>
<dbReference type="NCBIfam" id="NF003445">
    <property type="entry name" value="PRK04987.1"/>
    <property type="match status" value="1"/>
</dbReference>
<dbReference type="Pfam" id="PF02300">
    <property type="entry name" value="Fumarate_red_C"/>
    <property type="match status" value="1"/>
</dbReference>
<dbReference type="PIRSF" id="PIRSF000180">
    <property type="entry name" value="FrdC"/>
    <property type="match status" value="1"/>
</dbReference>
<dbReference type="SUPFAM" id="SSF81343">
    <property type="entry name" value="Fumarate reductase respiratory complex transmembrane subunits"/>
    <property type="match status" value="1"/>
</dbReference>
<accession>B4TSD6</accession>
<organism>
    <name type="scientific">Salmonella schwarzengrund (strain CVM19633)</name>
    <dbReference type="NCBI Taxonomy" id="439843"/>
    <lineage>
        <taxon>Bacteria</taxon>
        <taxon>Pseudomonadati</taxon>
        <taxon>Pseudomonadota</taxon>
        <taxon>Gammaproteobacteria</taxon>
        <taxon>Enterobacterales</taxon>
        <taxon>Enterobacteriaceae</taxon>
        <taxon>Salmonella</taxon>
    </lineage>
</organism>
<protein>
    <recommendedName>
        <fullName evidence="1">Fumarate reductase subunit C</fullName>
    </recommendedName>
    <alternativeName>
        <fullName evidence="1">Fumarate reductase 15 kDa hydrophobic protein</fullName>
    </alternativeName>
    <alternativeName>
        <fullName evidence="1">Quinol-fumarate reductase subunit C</fullName>
        <shortName evidence="1">QFR subunit C</shortName>
    </alternativeName>
</protein>
<sequence>MTTKRKPYVRPMTSTWWKKLPFYRFYMLREGTAVPAVWFSIELIFGLFALKHGAESWMGFVGFLQNPVVVILNLITLAAALLHTKTWFELAPKAANIIVKDEKMGPEPIIKGLWVVTAVVTVVILYVALFW</sequence>
<keyword id="KW-0997">Cell inner membrane</keyword>
<keyword id="KW-1003">Cell membrane</keyword>
<keyword id="KW-0472">Membrane</keyword>
<keyword id="KW-0812">Transmembrane</keyword>
<keyword id="KW-1133">Transmembrane helix</keyword>
<evidence type="ECO:0000255" key="1">
    <source>
        <dbReference type="HAMAP-Rule" id="MF_00708"/>
    </source>
</evidence>
<gene>
    <name evidence="1" type="primary">frdC</name>
    <name type="ordered locus">SeSA_A4611</name>
</gene>
<name>FRDC_SALSV</name>
<feature type="chain" id="PRO_1000132387" description="Fumarate reductase subunit C">
    <location>
        <begin position="1"/>
        <end position="131"/>
    </location>
</feature>
<feature type="transmembrane region" description="Helical" evidence="1">
    <location>
        <begin position="30"/>
        <end position="50"/>
    </location>
</feature>
<feature type="transmembrane region" description="Helical" evidence="1">
    <location>
        <begin position="57"/>
        <end position="77"/>
    </location>
</feature>
<feature type="transmembrane region" description="Helical" evidence="1">
    <location>
        <begin position="109"/>
        <end position="129"/>
    </location>
</feature>
<comment type="function">
    <text evidence="1">Two distinct, membrane-bound, FAD-containing enzymes are responsible for the catalysis of fumarate and succinate interconversion; fumarate reductase is used in anaerobic growth, and succinate dehydrogenase is used in aerobic growth. Anchors the catalytic components of the fumarate reductase complex to the cell inner membrane, binds quinones.</text>
</comment>
<comment type="subunit">
    <text evidence="1">Part of an enzyme complex containing four subunits: a flavoprotein (FrdA), an iron-sulfur protein (FrdB), and two hydrophobic anchor proteins (FrdC and FrdD).</text>
</comment>
<comment type="subcellular location">
    <subcellularLocation>
        <location evidence="1">Cell inner membrane</location>
        <topology evidence="1">Multi-pass membrane protein</topology>
    </subcellularLocation>
</comment>
<comment type="similarity">
    <text evidence="1">Belongs to the FrdC family.</text>
</comment>
<reference key="1">
    <citation type="journal article" date="2011" name="J. Bacteriol.">
        <title>Comparative genomics of 28 Salmonella enterica isolates: evidence for CRISPR-mediated adaptive sublineage evolution.</title>
        <authorList>
            <person name="Fricke W.F."/>
            <person name="Mammel M.K."/>
            <person name="McDermott P.F."/>
            <person name="Tartera C."/>
            <person name="White D.G."/>
            <person name="Leclerc J.E."/>
            <person name="Ravel J."/>
            <person name="Cebula T.A."/>
        </authorList>
    </citation>
    <scope>NUCLEOTIDE SEQUENCE [LARGE SCALE GENOMIC DNA]</scope>
    <source>
        <strain>CVM19633</strain>
    </source>
</reference>
<proteinExistence type="inferred from homology"/>